<keyword id="KW-0007">Acetylation</keyword>
<keyword id="KW-0025">Alternative splicing</keyword>
<keyword id="KW-0342">GTP-binding</keyword>
<keyword id="KW-0436">Ligase</keyword>
<keyword id="KW-0460">Magnesium</keyword>
<keyword id="KW-0479">Metal-binding</keyword>
<keyword id="KW-0496">Mitochondrion</keyword>
<keyword id="KW-0547">Nucleotide-binding</keyword>
<keyword id="KW-0597">Phosphoprotein</keyword>
<keyword id="KW-1185">Reference proteome</keyword>
<keyword id="KW-0809">Transit peptide</keyword>
<keyword id="KW-0816">Tricarboxylic acid cycle</keyword>
<reference key="1">
    <citation type="journal article" date="2005" name="Science">
        <title>The transcriptional landscape of the mammalian genome.</title>
        <authorList>
            <person name="Carninci P."/>
            <person name="Kasukawa T."/>
            <person name="Katayama S."/>
            <person name="Gough J."/>
            <person name="Frith M.C."/>
            <person name="Maeda N."/>
            <person name="Oyama R."/>
            <person name="Ravasi T."/>
            <person name="Lenhard B."/>
            <person name="Wells C."/>
            <person name="Kodzius R."/>
            <person name="Shimokawa K."/>
            <person name="Bajic V.B."/>
            <person name="Brenner S.E."/>
            <person name="Batalov S."/>
            <person name="Forrest A.R."/>
            <person name="Zavolan M."/>
            <person name="Davis M.J."/>
            <person name="Wilming L.G."/>
            <person name="Aidinis V."/>
            <person name="Allen J.E."/>
            <person name="Ambesi-Impiombato A."/>
            <person name="Apweiler R."/>
            <person name="Aturaliya R.N."/>
            <person name="Bailey T.L."/>
            <person name="Bansal M."/>
            <person name="Baxter L."/>
            <person name="Beisel K.W."/>
            <person name="Bersano T."/>
            <person name="Bono H."/>
            <person name="Chalk A.M."/>
            <person name="Chiu K.P."/>
            <person name="Choudhary V."/>
            <person name="Christoffels A."/>
            <person name="Clutterbuck D.R."/>
            <person name="Crowe M.L."/>
            <person name="Dalla E."/>
            <person name="Dalrymple B.P."/>
            <person name="de Bono B."/>
            <person name="Della Gatta G."/>
            <person name="di Bernardo D."/>
            <person name="Down T."/>
            <person name="Engstrom P."/>
            <person name="Fagiolini M."/>
            <person name="Faulkner G."/>
            <person name="Fletcher C.F."/>
            <person name="Fukushima T."/>
            <person name="Furuno M."/>
            <person name="Futaki S."/>
            <person name="Gariboldi M."/>
            <person name="Georgii-Hemming P."/>
            <person name="Gingeras T.R."/>
            <person name="Gojobori T."/>
            <person name="Green R.E."/>
            <person name="Gustincich S."/>
            <person name="Harbers M."/>
            <person name="Hayashi Y."/>
            <person name="Hensch T.K."/>
            <person name="Hirokawa N."/>
            <person name="Hill D."/>
            <person name="Huminiecki L."/>
            <person name="Iacono M."/>
            <person name="Ikeo K."/>
            <person name="Iwama A."/>
            <person name="Ishikawa T."/>
            <person name="Jakt M."/>
            <person name="Kanapin A."/>
            <person name="Katoh M."/>
            <person name="Kawasawa Y."/>
            <person name="Kelso J."/>
            <person name="Kitamura H."/>
            <person name="Kitano H."/>
            <person name="Kollias G."/>
            <person name="Krishnan S.P."/>
            <person name="Kruger A."/>
            <person name="Kummerfeld S.K."/>
            <person name="Kurochkin I.V."/>
            <person name="Lareau L.F."/>
            <person name="Lazarevic D."/>
            <person name="Lipovich L."/>
            <person name="Liu J."/>
            <person name="Liuni S."/>
            <person name="McWilliam S."/>
            <person name="Madan Babu M."/>
            <person name="Madera M."/>
            <person name="Marchionni L."/>
            <person name="Matsuda H."/>
            <person name="Matsuzawa S."/>
            <person name="Miki H."/>
            <person name="Mignone F."/>
            <person name="Miyake S."/>
            <person name="Morris K."/>
            <person name="Mottagui-Tabar S."/>
            <person name="Mulder N."/>
            <person name="Nakano N."/>
            <person name="Nakauchi H."/>
            <person name="Ng P."/>
            <person name="Nilsson R."/>
            <person name="Nishiguchi S."/>
            <person name="Nishikawa S."/>
            <person name="Nori F."/>
            <person name="Ohara O."/>
            <person name="Okazaki Y."/>
            <person name="Orlando V."/>
            <person name="Pang K.C."/>
            <person name="Pavan W.J."/>
            <person name="Pavesi G."/>
            <person name="Pesole G."/>
            <person name="Petrovsky N."/>
            <person name="Piazza S."/>
            <person name="Reed J."/>
            <person name="Reid J.F."/>
            <person name="Ring B.Z."/>
            <person name="Ringwald M."/>
            <person name="Rost B."/>
            <person name="Ruan Y."/>
            <person name="Salzberg S.L."/>
            <person name="Sandelin A."/>
            <person name="Schneider C."/>
            <person name="Schoenbach C."/>
            <person name="Sekiguchi K."/>
            <person name="Semple C.A."/>
            <person name="Seno S."/>
            <person name="Sessa L."/>
            <person name="Sheng Y."/>
            <person name="Shibata Y."/>
            <person name="Shimada H."/>
            <person name="Shimada K."/>
            <person name="Silva D."/>
            <person name="Sinclair B."/>
            <person name="Sperling S."/>
            <person name="Stupka E."/>
            <person name="Sugiura K."/>
            <person name="Sultana R."/>
            <person name="Takenaka Y."/>
            <person name="Taki K."/>
            <person name="Tammoja K."/>
            <person name="Tan S.L."/>
            <person name="Tang S."/>
            <person name="Taylor M.S."/>
            <person name="Tegner J."/>
            <person name="Teichmann S.A."/>
            <person name="Ueda H.R."/>
            <person name="van Nimwegen E."/>
            <person name="Verardo R."/>
            <person name="Wei C.L."/>
            <person name="Yagi K."/>
            <person name="Yamanishi H."/>
            <person name="Zabarovsky E."/>
            <person name="Zhu S."/>
            <person name="Zimmer A."/>
            <person name="Hide W."/>
            <person name="Bult C."/>
            <person name="Grimmond S.M."/>
            <person name="Teasdale R.D."/>
            <person name="Liu E.T."/>
            <person name="Brusic V."/>
            <person name="Quackenbush J."/>
            <person name="Wahlestedt C."/>
            <person name="Mattick J.S."/>
            <person name="Hume D.A."/>
            <person name="Kai C."/>
            <person name="Sasaki D."/>
            <person name="Tomaru Y."/>
            <person name="Fukuda S."/>
            <person name="Kanamori-Katayama M."/>
            <person name="Suzuki M."/>
            <person name="Aoki J."/>
            <person name="Arakawa T."/>
            <person name="Iida J."/>
            <person name="Imamura K."/>
            <person name="Itoh M."/>
            <person name="Kato T."/>
            <person name="Kawaji H."/>
            <person name="Kawagashira N."/>
            <person name="Kawashima T."/>
            <person name="Kojima M."/>
            <person name="Kondo S."/>
            <person name="Konno H."/>
            <person name="Nakano K."/>
            <person name="Ninomiya N."/>
            <person name="Nishio T."/>
            <person name="Okada M."/>
            <person name="Plessy C."/>
            <person name="Shibata K."/>
            <person name="Shiraki T."/>
            <person name="Suzuki S."/>
            <person name="Tagami M."/>
            <person name="Waki K."/>
            <person name="Watahiki A."/>
            <person name="Okamura-Oho Y."/>
            <person name="Suzuki H."/>
            <person name="Kawai J."/>
            <person name="Hayashizaki Y."/>
        </authorList>
    </citation>
    <scope>NUCLEOTIDE SEQUENCE [LARGE SCALE MRNA] (ISOFORMS 1 AND 2)</scope>
    <source>
        <strain>C57BL/6J</strain>
        <strain>NOD</strain>
        <tissue>Placenta</tissue>
        <tissue>Spleen</tissue>
    </source>
</reference>
<reference key="2">
    <citation type="journal article" date="2004" name="Genome Res.">
        <title>The status, quality, and expansion of the NIH full-length cDNA project: the Mammalian Gene Collection (MGC).</title>
        <authorList>
            <consortium name="The MGC Project Team"/>
        </authorList>
    </citation>
    <scope>NUCLEOTIDE SEQUENCE [LARGE SCALE MRNA] (ISOFORM 1)</scope>
    <source>
        <strain>C57BL/6J</strain>
        <strain>FVB/N</strain>
        <tissue>Kidney</tissue>
        <tissue>Liver</tissue>
        <tissue>Mammary tumor</tissue>
    </source>
</reference>
<reference key="3">
    <citation type="journal article" date="1998" name="J. Biol. Chem.">
        <title>Genetic evidence for the expression of ATP- and GTP-specific succinyl-CoA synthetases in multicellular eucaryotes.</title>
        <authorList>
            <person name="Johnson J.D."/>
            <person name="Mehus J.G."/>
            <person name="Tews K."/>
            <person name="Milavetz B.I."/>
            <person name="Lambeth D.O."/>
        </authorList>
    </citation>
    <scope>NUCLEOTIDE SEQUENCE [MRNA] OF 30-433 (ISOFORM 1)</scope>
    <source>
        <tissue>Heart</tissue>
    </source>
</reference>
<reference key="4">
    <citation type="journal article" date="2010" name="Cell">
        <title>A tissue-specific atlas of mouse protein phosphorylation and expression.</title>
        <authorList>
            <person name="Huttlin E.L."/>
            <person name="Jedrychowski M.P."/>
            <person name="Elias J.E."/>
            <person name="Goswami T."/>
            <person name="Rad R."/>
            <person name="Beausoleil S.A."/>
            <person name="Villen J."/>
            <person name="Haas W."/>
            <person name="Sowa M.E."/>
            <person name="Gygi S.P."/>
        </authorList>
    </citation>
    <scope>PHOSPHORYLATION [LARGE SCALE ANALYSIS] AT SER-162 AND SER-217</scope>
    <scope>IDENTIFICATION BY MASS SPECTROMETRY [LARGE SCALE ANALYSIS]</scope>
    <source>
        <tissue>Brain</tissue>
        <tissue>Brown adipose tissue</tissue>
        <tissue>Heart</tissue>
        <tissue>Kidney</tissue>
        <tissue>Liver</tissue>
        <tissue>Lung</tissue>
        <tissue>Pancreas</tissue>
        <tissue>Spleen</tissue>
        <tissue>Testis</tissue>
    </source>
</reference>
<reference key="5">
    <citation type="journal article" date="2013" name="Mol. Cell">
        <title>SIRT5-mediated lysine desuccinylation impacts diverse metabolic pathways.</title>
        <authorList>
            <person name="Park J."/>
            <person name="Chen Y."/>
            <person name="Tishkoff D.X."/>
            <person name="Peng C."/>
            <person name="Tan M."/>
            <person name="Dai L."/>
            <person name="Xie Z."/>
            <person name="Zhang Y."/>
            <person name="Zwaans B.M."/>
            <person name="Skinner M.E."/>
            <person name="Lombard D.B."/>
            <person name="Zhao Y."/>
        </authorList>
    </citation>
    <scope>SUCCINYLATION [LARGE SCALE ANALYSIS] AT LYS-67; LYS-79 AND LYS-339</scope>
    <scope>IDENTIFICATION BY MASS SPECTROMETRY [LARGE SCALE ANALYSIS]</scope>
    <source>
        <tissue>Liver</tissue>
    </source>
</reference>
<reference key="6">
    <citation type="journal article" date="2013" name="Proc. Natl. Acad. Sci. U.S.A.">
        <title>Label-free quantitative proteomics of the lysine acetylome in mitochondria identifies substrates of SIRT3 in metabolic pathways.</title>
        <authorList>
            <person name="Rardin M.J."/>
            <person name="Newman J.C."/>
            <person name="Held J.M."/>
            <person name="Cusack M.P."/>
            <person name="Sorensen D.J."/>
            <person name="Li B."/>
            <person name="Schilling B."/>
            <person name="Mooney S.D."/>
            <person name="Kahn C.R."/>
            <person name="Verdin E."/>
            <person name="Gibson B.W."/>
        </authorList>
    </citation>
    <scope>ACETYLATION [LARGE SCALE ANALYSIS] AT LYS-67; LYS-74; LYS-112; LYS-133; LYS-140; LYS-201; LYS-219; LYS-228; LYS-272; LYS-348; LYS-387; LYS-407 AND LYS-424</scope>
    <scope>IDENTIFICATION BY MASS SPECTROMETRY [LARGE SCALE ANALYSIS]</scope>
    <source>
        <tissue>Liver</tissue>
    </source>
</reference>
<feature type="transit peptide" description="Mitochondrion" evidence="1">
    <location>
        <begin position="1"/>
        <end position="38"/>
    </location>
</feature>
<feature type="chain" id="PRO_0000033357" description="Succinate--CoA ligase [GDP-forming] subunit beta, mitochondrial">
    <location>
        <begin position="39"/>
        <end position="433"/>
    </location>
</feature>
<feature type="domain" description="ATP-grasp" evidence="2">
    <location>
        <begin position="47"/>
        <end position="275"/>
    </location>
</feature>
<feature type="binding site" evidence="2">
    <location>
        <position position="58"/>
    </location>
    <ligand>
        <name>GTP</name>
        <dbReference type="ChEBI" id="CHEBI:37565"/>
    </ligand>
</feature>
<feature type="binding site" evidence="2">
    <location>
        <begin position="91"/>
        <end position="93"/>
    </location>
    <ligand>
        <name>GTP</name>
        <dbReference type="ChEBI" id="CHEBI:37565"/>
    </ligand>
</feature>
<feature type="binding site" evidence="2">
    <location>
        <position position="147"/>
    </location>
    <ligand>
        <name>GTP</name>
        <dbReference type="ChEBI" id="CHEBI:37565"/>
    </ligand>
</feature>
<feature type="binding site" evidence="2">
    <location>
        <position position="244"/>
    </location>
    <ligand>
        <name>Mg(2+)</name>
        <dbReference type="ChEBI" id="CHEBI:18420"/>
    </ligand>
</feature>
<feature type="binding site" evidence="2">
    <location>
        <position position="258"/>
    </location>
    <ligand>
        <name>Mg(2+)</name>
        <dbReference type="ChEBI" id="CHEBI:18420"/>
    </ligand>
</feature>
<feature type="binding site" evidence="2">
    <location>
        <position position="309"/>
    </location>
    <ligand>
        <name>substrate</name>
        <note>ligand shared with subunit alpha</note>
    </ligand>
</feature>
<feature type="binding site" evidence="2">
    <location>
        <begin position="366"/>
        <end position="368"/>
    </location>
    <ligand>
        <name>substrate</name>
        <note>ligand shared with subunit alpha</note>
    </ligand>
</feature>
<feature type="site" description="Important for substrate specificity" evidence="2">
    <location>
        <position position="80"/>
    </location>
</feature>
<feature type="site" description="Important for substrate specificity" evidence="2">
    <location>
        <position position="148"/>
    </location>
</feature>
<feature type="modified residue" description="N6-acetyllysine; alternate" evidence="6">
    <location>
        <position position="67"/>
    </location>
</feature>
<feature type="modified residue" description="N6-succinyllysine; alternate" evidence="7">
    <location>
        <position position="67"/>
    </location>
</feature>
<feature type="modified residue" description="N6-acetyllysine" evidence="6">
    <location>
        <position position="74"/>
    </location>
</feature>
<feature type="modified residue" description="N6-succinyllysine" evidence="7">
    <location>
        <position position="79"/>
    </location>
</feature>
<feature type="modified residue" description="N6-acetyllysine" evidence="6">
    <location>
        <position position="112"/>
    </location>
</feature>
<feature type="modified residue" description="N6-acetyllysine" evidence="6">
    <location>
        <position position="133"/>
    </location>
</feature>
<feature type="modified residue" description="N6-acetyllysine" evidence="6">
    <location>
        <position position="140"/>
    </location>
</feature>
<feature type="modified residue" description="Phosphoserine" evidence="5">
    <location>
        <position position="162"/>
    </location>
</feature>
<feature type="modified residue" description="N6-acetyllysine" evidence="6">
    <location>
        <position position="201"/>
    </location>
</feature>
<feature type="modified residue" description="Phosphoserine" evidence="5">
    <location>
        <position position="217"/>
    </location>
</feature>
<feature type="modified residue" description="N6-acetyllysine" evidence="6">
    <location>
        <position position="219"/>
    </location>
</feature>
<feature type="modified residue" description="N6-acetyllysine" evidence="6">
    <location>
        <position position="228"/>
    </location>
</feature>
<feature type="modified residue" description="N6-acetyllysine" evidence="6">
    <location>
        <position position="272"/>
    </location>
</feature>
<feature type="modified residue" description="N6-succinyllysine" evidence="7">
    <location>
        <position position="339"/>
    </location>
</feature>
<feature type="modified residue" description="N6-acetyllysine" evidence="6">
    <location>
        <position position="348"/>
    </location>
</feature>
<feature type="modified residue" description="N6-acetyllysine" evidence="6">
    <location>
        <position position="387"/>
    </location>
</feature>
<feature type="modified residue" description="N6-acetyllysine" evidence="6">
    <location>
        <position position="407"/>
    </location>
</feature>
<feature type="modified residue" description="N6-acetyllysine" evidence="6">
    <location>
        <position position="424"/>
    </location>
</feature>
<feature type="splice variant" id="VSP_016905" description="In isoform 2." evidence="3">
    <location>
        <begin position="1"/>
        <end position="49"/>
    </location>
</feature>
<feature type="sequence conflict" description="In Ref. 1; BAE43106/BAE43068." evidence="4" ref="1">
    <original>A</original>
    <variation>T</variation>
    <location>
        <position position="66"/>
    </location>
</feature>
<feature type="sequence conflict" description="In Ref. 3; AAC64399." evidence="4" ref="3">
    <original>I</original>
    <variation>L</variation>
    <location>
        <position position="168"/>
    </location>
</feature>
<feature type="sequence conflict" description="In Ref. 3; AAC64399." evidence="4" ref="3">
    <original>GV</original>
    <variation>RS</variation>
    <location>
        <begin position="175"/>
        <end position="176"/>
    </location>
</feature>
<feature type="sequence conflict" description="In Ref. 2; AAH80781." evidence="4" ref="2">
    <original>L</original>
    <variation>P</variation>
    <location>
        <position position="212"/>
    </location>
</feature>
<organism>
    <name type="scientific">Mus musculus</name>
    <name type="common">Mouse</name>
    <dbReference type="NCBI Taxonomy" id="10090"/>
    <lineage>
        <taxon>Eukaryota</taxon>
        <taxon>Metazoa</taxon>
        <taxon>Chordata</taxon>
        <taxon>Craniata</taxon>
        <taxon>Vertebrata</taxon>
        <taxon>Euteleostomi</taxon>
        <taxon>Mammalia</taxon>
        <taxon>Eutheria</taxon>
        <taxon>Euarchontoglires</taxon>
        <taxon>Glires</taxon>
        <taxon>Rodentia</taxon>
        <taxon>Myomorpha</taxon>
        <taxon>Muroidea</taxon>
        <taxon>Muridae</taxon>
        <taxon>Murinae</taxon>
        <taxon>Mus</taxon>
        <taxon>Mus</taxon>
    </lineage>
</organism>
<evidence type="ECO:0000250" key="1">
    <source>
        <dbReference type="UniProtKB" id="Q96I99"/>
    </source>
</evidence>
<evidence type="ECO:0000255" key="2">
    <source>
        <dbReference type="HAMAP-Rule" id="MF_03221"/>
    </source>
</evidence>
<evidence type="ECO:0000303" key="3">
    <source>
    </source>
</evidence>
<evidence type="ECO:0000305" key="4"/>
<evidence type="ECO:0007744" key="5">
    <source>
    </source>
</evidence>
<evidence type="ECO:0007744" key="6">
    <source>
    </source>
</evidence>
<evidence type="ECO:0007744" key="7">
    <source>
    </source>
</evidence>
<accession>Q9Z2I8</accession>
<accession>Q3T9B8</accession>
<accession>Q3TJQ5</accession>
<accession>Q3TK63</accession>
<accession>Q66JT3</accession>
<accession>Q7TMY3</accession>
<accession>Q80VV1</accession>
<accession>Q8K2K9</accession>
<proteinExistence type="evidence at protein level"/>
<dbReference type="EC" id="6.2.1.4" evidence="2"/>
<dbReference type="EMBL" id="AK167136">
    <property type="protein sequence ID" value="BAE39282.1"/>
    <property type="molecule type" value="mRNA"/>
</dbReference>
<dbReference type="EMBL" id="AK167339">
    <property type="protein sequence ID" value="BAE39440.1"/>
    <property type="molecule type" value="mRNA"/>
</dbReference>
<dbReference type="EMBL" id="AK172561">
    <property type="protein sequence ID" value="BAE43068.1"/>
    <property type="molecule type" value="mRNA"/>
</dbReference>
<dbReference type="EMBL" id="AK172633">
    <property type="protein sequence ID" value="BAE43106.1"/>
    <property type="molecule type" value="mRNA"/>
</dbReference>
<dbReference type="EMBL" id="BC030947">
    <property type="protein sequence ID" value="AAH30947.1"/>
    <property type="molecule type" value="mRNA"/>
</dbReference>
<dbReference type="EMBL" id="BC043312">
    <property type="protein sequence ID" value="AAH43312.1"/>
    <property type="molecule type" value="mRNA"/>
</dbReference>
<dbReference type="EMBL" id="BC054425">
    <property type="protein sequence ID" value="AAH54425.1"/>
    <property type="molecule type" value="mRNA"/>
</dbReference>
<dbReference type="EMBL" id="BC080781">
    <property type="protein sequence ID" value="AAH80781.1"/>
    <property type="molecule type" value="mRNA"/>
</dbReference>
<dbReference type="EMBL" id="AF058956">
    <property type="protein sequence ID" value="AAC64399.1"/>
    <property type="molecule type" value="mRNA"/>
</dbReference>
<dbReference type="CCDS" id="CCDS20381.1">
    <molecule id="Q9Z2I8-1"/>
</dbReference>
<dbReference type="CCDS" id="CCDS85100.1">
    <molecule id="Q9Z2I8-2"/>
</dbReference>
<dbReference type="RefSeq" id="NP_001313487.1">
    <molecule id="Q9Z2I8-2"/>
    <property type="nucleotide sequence ID" value="NM_001326558.2"/>
</dbReference>
<dbReference type="RefSeq" id="NP_035637.2">
    <molecule id="Q9Z2I8-1"/>
    <property type="nucleotide sequence ID" value="NM_011507.4"/>
</dbReference>
<dbReference type="SMR" id="Q9Z2I8"/>
<dbReference type="BioGRID" id="203571">
    <property type="interactions" value="17"/>
</dbReference>
<dbReference type="CORUM" id="Q9Z2I8"/>
<dbReference type="FunCoup" id="Q9Z2I8">
    <property type="interactions" value="1454"/>
</dbReference>
<dbReference type="IntAct" id="Q9Z2I8">
    <property type="interactions" value="5"/>
</dbReference>
<dbReference type="MINT" id="Q9Z2I8"/>
<dbReference type="STRING" id="10090.ENSMUSP00000144827"/>
<dbReference type="GlyGen" id="Q9Z2I8">
    <property type="glycosylation" value="1 site, 1 O-linked glycan (1 site)"/>
</dbReference>
<dbReference type="iPTMnet" id="Q9Z2I8"/>
<dbReference type="PhosphoSitePlus" id="Q9Z2I8"/>
<dbReference type="SwissPalm" id="Q9Z2I8"/>
<dbReference type="REPRODUCTION-2DPAGE" id="Q9Z2I8"/>
<dbReference type="jPOST" id="Q9Z2I8"/>
<dbReference type="PaxDb" id="10090-ENSMUSP00000078774"/>
<dbReference type="PeptideAtlas" id="Q9Z2I8"/>
<dbReference type="ProteomicsDB" id="257474">
    <molecule id="Q9Z2I8-1"/>
</dbReference>
<dbReference type="ProteomicsDB" id="257475">
    <molecule id="Q9Z2I8-2"/>
</dbReference>
<dbReference type="Pumba" id="Q9Z2I8"/>
<dbReference type="Antibodypedia" id="31838">
    <property type="antibodies" value="124 antibodies from 26 providers"/>
</dbReference>
<dbReference type="DNASU" id="20917"/>
<dbReference type="Ensembl" id="ENSMUST00000079847.8">
    <molecule id="Q9Z2I8-2"/>
    <property type="protein sequence ID" value="ENSMUSP00000078774.7"/>
    <property type="gene ID" value="ENSMUSG00000061838.8"/>
</dbReference>
<dbReference type="Ensembl" id="ENSMUST00000204224.3">
    <molecule id="Q9Z2I8-1"/>
    <property type="protein sequence ID" value="ENSMUSP00000144827.2"/>
    <property type="gene ID" value="ENSMUSG00000061838.8"/>
</dbReference>
<dbReference type="GeneID" id="20917"/>
<dbReference type="KEGG" id="mmu:20917"/>
<dbReference type="UCSC" id="uc009daa.3">
    <molecule id="Q9Z2I8-1"/>
    <property type="organism name" value="mouse"/>
</dbReference>
<dbReference type="AGR" id="MGI:1306824"/>
<dbReference type="CTD" id="8801"/>
<dbReference type="MGI" id="MGI:1306824">
    <property type="gene designation" value="Suclg2"/>
</dbReference>
<dbReference type="VEuPathDB" id="HostDB:ENSMUSG00000061838"/>
<dbReference type="eggNOG" id="KOG1447">
    <property type="taxonomic scope" value="Eukaryota"/>
</dbReference>
<dbReference type="GeneTree" id="ENSGT00390000010170"/>
<dbReference type="HOGENOM" id="CLU_037430_0_1_1"/>
<dbReference type="InParanoid" id="Q9Z2I8"/>
<dbReference type="OMA" id="KQMIGNR"/>
<dbReference type="OrthoDB" id="1552at2759"/>
<dbReference type="PhylomeDB" id="Q9Z2I8"/>
<dbReference type="TreeFam" id="TF300624"/>
<dbReference type="Reactome" id="R-MMU-71403">
    <property type="pathway name" value="Citric acid cycle (TCA cycle)"/>
</dbReference>
<dbReference type="Reactome" id="R-MMU-9837999">
    <property type="pathway name" value="Mitochondrial protein degradation"/>
</dbReference>
<dbReference type="UniPathway" id="UPA00223">
    <property type="reaction ID" value="UER00999"/>
</dbReference>
<dbReference type="BioGRID-ORCS" id="20917">
    <property type="hits" value="0 hits in 83 CRISPR screens"/>
</dbReference>
<dbReference type="ChiTaRS" id="Suclg2">
    <property type="organism name" value="mouse"/>
</dbReference>
<dbReference type="PRO" id="PR:Q9Z2I8"/>
<dbReference type="Proteomes" id="UP000000589">
    <property type="component" value="Chromosome 6"/>
</dbReference>
<dbReference type="RNAct" id="Q9Z2I8">
    <property type="molecule type" value="protein"/>
</dbReference>
<dbReference type="Bgee" id="ENSMUSG00000061838">
    <property type="expression patterns" value="Expressed in right kidney and 136 other cell types or tissues"/>
</dbReference>
<dbReference type="ExpressionAtlas" id="Q9Z2I8">
    <property type="expression patterns" value="baseline and differential"/>
</dbReference>
<dbReference type="GO" id="GO:0005739">
    <property type="term" value="C:mitochondrion"/>
    <property type="evidence" value="ECO:0007005"/>
    <property type="project" value="MGI"/>
</dbReference>
<dbReference type="GO" id="GO:0005886">
    <property type="term" value="C:plasma membrane"/>
    <property type="evidence" value="ECO:0007669"/>
    <property type="project" value="Ensembl"/>
</dbReference>
<dbReference type="GO" id="GO:0045244">
    <property type="term" value="C:succinate-CoA ligase complex (GDP-forming)"/>
    <property type="evidence" value="ECO:0007669"/>
    <property type="project" value="Ensembl"/>
</dbReference>
<dbReference type="GO" id="GO:0005524">
    <property type="term" value="F:ATP binding"/>
    <property type="evidence" value="ECO:0007669"/>
    <property type="project" value="InterPro"/>
</dbReference>
<dbReference type="GO" id="GO:0019003">
    <property type="term" value="F:GDP binding"/>
    <property type="evidence" value="ECO:0007669"/>
    <property type="project" value="Ensembl"/>
</dbReference>
<dbReference type="GO" id="GO:0005525">
    <property type="term" value="F:GTP binding"/>
    <property type="evidence" value="ECO:0007669"/>
    <property type="project" value="UniProtKB-UniRule"/>
</dbReference>
<dbReference type="GO" id="GO:0000287">
    <property type="term" value="F:magnesium ion binding"/>
    <property type="evidence" value="ECO:0007669"/>
    <property type="project" value="UniProtKB-UniRule"/>
</dbReference>
<dbReference type="GO" id="GO:0044877">
    <property type="term" value="F:protein-containing complex binding"/>
    <property type="evidence" value="ECO:0007669"/>
    <property type="project" value="Ensembl"/>
</dbReference>
<dbReference type="GO" id="GO:0004775">
    <property type="term" value="F:succinate-CoA ligase (ADP-forming) activity"/>
    <property type="evidence" value="ECO:0007669"/>
    <property type="project" value="UniProtKB-UniRule"/>
</dbReference>
<dbReference type="GO" id="GO:0004776">
    <property type="term" value="F:succinate-CoA ligase (GDP-forming) activity"/>
    <property type="evidence" value="ECO:0007669"/>
    <property type="project" value="UniProtKB-EC"/>
</dbReference>
<dbReference type="GO" id="GO:0004777">
    <property type="term" value="F:succinate-semialdehyde dehydrogenase (NAD+) activity"/>
    <property type="evidence" value="ECO:0000247"/>
    <property type="project" value="MGI"/>
</dbReference>
<dbReference type="GO" id="GO:0006105">
    <property type="term" value="P:succinate metabolic process"/>
    <property type="evidence" value="ECO:0007669"/>
    <property type="project" value="Ensembl"/>
</dbReference>
<dbReference type="GO" id="GO:0006104">
    <property type="term" value="P:succinyl-CoA metabolic process"/>
    <property type="evidence" value="ECO:0007669"/>
    <property type="project" value="Ensembl"/>
</dbReference>
<dbReference type="GO" id="GO:0006099">
    <property type="term" value="P:tricarboxylic acid cycle"/>
    <property type="evidence" value="ECO:0007669"/>
    <property type="project" value="UniProtKB-UniRule"/>
</dbReference>
<dbReference type="FunFam" id="3.30.470.20:FF:000002">
    <property type="entry name" value="Succinate--CoA ligase [ADP-forming] subunit beta"/>
    <property type="match status" value="1"/>
</dbReference>
<dbReference type="FunFam" id="3.40.50.261:FF:000001">
    <property type="entry name" value="Succinate--CoA ligase [ADP-forming] subunit beta"/>
    <property type="match status" value="1"/>
</dbReference>
<dbReference type="FunFam" id="3.30.1490.20:FF:000004">
    <property type="entry name" value="Succinate--CoA ligase [ADP-forming] subunit beta, mitochondrial"/>
    <property type="match status" value="1"/>
</dbReference>
<dbReference type="Gene3D" id="3.30.1490.20">
    <property type="entry name" value="ATP-grasp fold, A domain"/>
    <property type="match status" value="1"/>
</dbReference>
<dbReference type="Gene3D" id="3.30.470.20">
    <property type="entry name" value="ATP-grasp fold, B domain"/>
    <property type="match status" value="1"/>
</dbReference>
<dbReference type="Gene3D" id="3.40.50.261">
    <property type="entry name" value="Succinyl-CoA synthetase domains"/>
    <property type="match status" value="1"/>
</dbReference>
<dbReference type="HAMAP" id="MF_00558">
    <property type="entry name" value="Succ_CoA_beta"/>
    <property type="match status" value="1"/>
</dbReference>
<dbReference type="HAMAP" id="MF_03221">
    <property type="entry name" value="Succ_CoA_betaG_euk"/>
    <property type="match status" value="1"/>
</dbReference>
<dbReference type="InterPro" id="IPR011761">
    <property type="entry name" value="ATP-grasp"/>
</dbReference>
<dbReference type="InterPro" id="IPR013650">
    <property type="entry name" value="ATP-grasp_succ-CoA_synth-type"/>
</dbReference>
<dbReference type="InterPro" id="IPR013815">
    <property type="entry name" value="ATP_grasp_subdomain_1"/>
</dbReference>
<dbReference type="InterPro" id="IPR017866">
    <property type="entry name" value="Succ-CoA_synthase_bsu_CS"/>
</dbReference>
<dbReference type="InterPro" id="IPR005811">
    <property type="entry name" value="SUCC_ACL_C"/>
</dbReference>
<dbReference type="InterPro" id="IPR034722">
    <property type="entry name" value="Succ_CoA_betaG_euk"/>
</dbReference>
<dbReference type="InterPro" id="IPR005809">
    <property type="entry name" value="Succ_CoA_ligase-like_bsu"/>
</dbReference>
<dbReference type="InterPro" id="IPR016102">
    <property type="entry name" value="Succinyl-CoA_synth-like"/>
</dbReference>
<dbReference type="NCBIfam" id="NF001913">
    <property type="entry name" value="PRK00696.1"/>
    <property type="match status" value="1"/>
</dbReference>
<dbReference type="NCBIfam" id="TIGR01016">
    <property type="entry name" value="sucCoAbeta"/>
    <property type="match status" value="1"/>
</dbReference>
<dbReference type="PANTHER" id="PTHR11815:SF10">
    <property type="entry name" value="SUCCINATE--COA LIGASE [GDP-FORMING] SUBUNIT BETA, MITOCHONDRIAL"/>
    <property type="match status" value="1"/>
</dbReference>
<dbReference type="PANTHER" id="PTHR11815">
    <property type="entry name" value="SUCCINYL-COA SYNTHETASE BETA CHAIN"/>
    <property type="match status" value="1"/>
</dbReference>
<dbReference type="Pfam" id="PF08442">
    <property type="entry name" value="ATP-grasp_2"/>
    <property type="match status" value="1"/>
</dbReference>
<dbReference type="Pfam" id="PF00549">
    <property type="entry name" value="Ligase_CoA"/>
    <property type="match status" value="1"/>
</dbReference>
<dbReference type="PIRSF" id="PIRSF001554">
    <property type="entry name" value="SucCS_beta"/>
    <property type="match status" value="1"/>
</dbReference>
<dbReference type="SUPFAM" id="SSF56059">
    <property type="entry name" value="Glutathione synthetase ATP-binding domain-like"/>
    <property type="match status" value="1"/>
</dbReference>
<dbReference type="SUPFAM" id="SSF52210">
    <property type="entry name" value="Succinyl-CoA synthetase domains"/>
    <property type="match status" value="1"/>
</dbReference>
<dbReference type="PROSITE" id="PS50975">
    <property type="entry name" value="ATP_GRASP"/>
    <property type="match status" value="1"/>
</dbReference>
<dbReference type="PROSITE" id="PS01217">
    <property type="entry name" value="SUCCINYL_COA_LIG_3"/>
    <property type="match status" value="1"/>
</dbReference>
<protein>
    <recommendedName>
        <fullName evidence="2">Succinate--CoA ligase [GDP-forming] subunit beta, mitochondrial</fullName>
        <ecNumber evidence="2">6.2.1.4</ecNumber>
    </recommendedName>
    <alternativeName>
        <fullName evidence="2">GTP-specific succinyl-CoA synthetase subunit beta</fullName>
        <shortName evidence="2">G-SCS</shortName>
        <shortName evidence="2">GTPSCS</shortName>
    </alternativeName>
    <alternativeName>
        <fullName evidence="2">Succinyl-CoA synthetase beta-G chain</fullName>
        <shortName evidence="2">SCS-betaG</shortName>
    </alternativeName>
</protein>
<name>SUCB2_MOUSE</name>
<sequence length="433" mass="46840">MASPVAIAAQAGKLLRERALRPLLAVRSQAGHLTPRRWLNLQEYQSKKLMSEHGVRVQRFFVANTAKEALEAAKRLNAKEIVLKAQILAGGRGKGVFNSGLKGGVHLTKDPKVVGELAQQMIGYNLATKQTPKEGVKVNKVMVAEALDISRETYLAILMDRSHNGPVIVGSPQGGVDIEEVAASSPELIFKEQIDIFEGIKDSQAQRMAENLGFLGSLKNQAADQITKLYHLFLKIDATQVEVNPFGETPEGQVVCFDAKINFDDNAEFRQKDIFAMDDKSENEPIENEAARYDLKYIGLDGNIACFVNGAGLAMATCDIIFLNGGKPANFLDLGGGVKEAQVYEAFKLLTSDPKVEAILVNIFGGIVNCAIIANGITKACRELELKVPLVVRLEGTNVQEAQNILKSSGLPITSAVDLEDAAKKAVASVAKK</sequence>
<comment type="function">
    <text evidence="2">GTP-specific succinyl-CoA synthetase functions in the citric acid cycle (TCA), coupling the hydrolysis of succinyl-CoA to the synthesis of GTP and thus represents the only step of substrate-level phosphorylation in the TCA. The beta subunit provides nucleotide specificity of the enzyme and binds the substrate succinate, while the binding sites for coenzyme A and phosphate are found in the alpha subunit.</text>
</comment>
<comment type="catalytic activity">
    <reaction evidence="2">
        <text>GTP + succinate + CoA = succinyl-CoA + GDP + phosphate</text>
        <dbReference type="Rhea" id="RHEA:22120"/>
        <dbReference type="ChEBI" id="CHEBI:30031"/>
        <dbReference type="ChEBI" id="CHEBI:37565"/>
        <dbReference type="ChEBI" id="CHEBI:43474"/>
        <dbReference type="ChEBI" id="CHEBI:57287"/>
        <dbReference type="ChEBI" id="CHEBI:57292"/>
        <dbReference type="ChEBI" id="CHEBI:58189"/>
        <dbReference type="EC" id="6.2.1.4"/>
    </reaction>
</comment>
<comment type="cofactor">
    <cofactor evidence="2">
        <name>Mg(2+)</name>
        <dbReference type="ChEBI" id="CHEBI:18420"/>
    </cofactor>
    <text evidence="2">Binds 1 Mg(2+) ion per subunit.</text>
</comment>
<comment type="pathway">
    <text evidence="2">Carbohydrate metabolism; tricarboxylic acid cycle; succinate from succinyl-CoA (ligase route): step 1/1.</text>
</comment>
<comment type="subunit">
    <text evidence="2">Heterodimer of an alpha and a beta subunit. The beta subunit determines specificity for GTP.</text>
</comment>
<comment type="subcellular location">
    <subcellularLocation>
        <location evidence="2">Mitochondrion</location>
    </subcellularLocation>
</comment>
<comment type="alternative products">
    <event type="alternative splicing"/>
    <isoform>
        <id>Q9Z2I8-1</id>
        <name>1</name>
        <sequence type="displayed"/>
    </isoform>
    <isoform>
        <id>Q9Z2I8-2</id>
        <name>2</name>
        <sequence type="described" ref="VSP_016905"/>
    </isoform>
</comment>
<comment type="similarity">
    <text evidence="2">Belongs to the succinate/malate CoA ligase beta subunit family. GTP-specific subunit beta subfamily.</text>
</comment>
<gene>
    <name evidence="2" type="primary">Suclg2</name>
</gene>